<organism>
    <name type="scientific">Neisseria meningitidis serogroup A / serotype 4A (strain DSM 15465 / Z2491)</name>
    <dbReference type="NCBI Taxonomy" id="122587"/>
    <lineage>
        <taxon>Bacteria</taxon>
        <taxon>Pseudomonadati</taxon>
        <taxon>Pseudomonadota</taxon>
        <taxon>Betaproteobacteria</taxon>
        <taxon>Neisseriales</taxon>
        <taxon>Neisseriaceae</taxon>
        <taxon>Neisseria</taxon>
    </lineage>
</organism>
<reference key="1">
    <citation type="journal article" date="2000" name="Nature">
        <title>Complete DNA sequence of a serogroup A strain of Neisseria meningitidis Z2491.</title>
        <authorList>
            <person name="Parkhill J."/>
            <person name="Achtman M."/>
            <person name="James K.D."/>
            <person name="Bentley S.D."/>
            <person name="Churcher C.M."/>
            <person name="Klee S.R."/>
            <person name="Morelli G."/>
            <person name="Basham D."/>
            <person name="Brown D."/>
            <person name="Chillingworth T."/>
            <person name="Davies R.M."/>
            <person name="Davis P."/>
            <person name="Devlin K."/>
            <person name="Feltwell T."/>
            <person name="Hamlin N."/>
            <person name="Holroyd S."/>
            <person name="Jagels K."/>
            <person name="Leather S."/>
            <person name="Moule S."/>
            <person name="Mungall K.L."/>
            <person name="Quail M.A."/>
            <person name="Rajandream M.A."/>
            <person name="Rutherford K.M."/>
            <person name="Simmonds M."/>
            <person name="Skelton J."/>
            <person name="Whitehead S."/>
            <person name="Spratt B.G."/>
            <person name="Barrell B.G."/>
        </authorList>
    </citation>
    <scope>NUCLEOTIDE SEQUENCE [LARGE SCALE GENOMIC DNA]</scope>
    <source>
        <strain>DSM 15465 / Z2491</strain>
    </source>
</reference>
<sequence length="929" mass="104185">MTDYSKTVNLLESPFPMRGNLAKREPAWLKSWYEQKRYQKLREIAKGRPKFILHDGPPYANGDIHIGHAVNKILKDIIIRSKTQAGFDAPYVPGWDCHGLPIEVMVEKLHGKDMPKARFRELCREYAAEQIARQKKDFIRLGVLGDWDNPYLTMDFKTEADTVRMLGEIYKSGYLYRGAKPVQFCLDCGSSLAEAEVEYKDKVSPAIDVGYPFKDTAALATAFGLAGIEGKAFAVIWTTTPWTLPASQAVSAGADVVYQLIDTPTGKLVLAKDLAEDALKRYGFSDGIAILAETTGDKLENLHMNHPFLERDIPMLNGEHVTTDAGTGLVHTAPAHGLEDYAVCNKYGIELYNPVNAEGKYIGETPRVAGMRVWEANSVILQWLEETGNLLASSKIEHSYAHCWRHKTPLIYRATGQWFVGMDKAGADGKTLRDKAIKAVDDTEFFPSWGRARLEAMIEGRPDWVVSRQRYWGTPMTFFVHKETGELHPNSAELLEKVAQRIEEKGIEAWFSLDKGELLSAEDCEHYDKLSDTMDVWFDSGSTHYSVLKQREELDWPADLYLEGSDQHRGWFQSSMLTGCASSMGRAPYKQLLTHGFVVDQNGRKMSKSIGNVVAPQEVYNEFGADILRLWAASTDYSGELAISKEILKRVTESYRRIRNTLSFLFANLSDFNPIEDAVQQADMVEIDRYALVLARRLQERVAGDFYPRYAFHFAVKEMVSFCSEDLGAFYLDILKDRLYTTKADSRARRSAQTALYHITRSLVLLIAPILCFTGEEAWDIIGGGAEDSVLFHTWHEFPTINEKAEAELVKKWTAIREAREAVTAAIEPLRADKTVGSSLQAEAEITAPEEMAGYLNALGEELRFALLVSKAEVKVGSELAVAAKASDGEKCERCWHYTRDVGAVAGHETVCKRCAENVGGEGETRHYA</sequence>
<gene>
    <name evidence="1" type="primary">ileS</name>
    <name type="ordered locus">NMA0622</name>
</gene>
<feature type="chain" id="PRO_0000098428" description="Isoleucine--tRNA ligase">
    <location>
        <begin position="1"/>
        <end position="929"/>
    </location>
</feature>
<feature type="short sequence motif" description="'HIGH' region">
    <location>
        <begin position="58"/>
        <end position="68"/>
    </location>
</feature>
<feature type="short sequence motif" description="'KMSKS' region">
    <location>
        <begin position="605"/>
        <end position="609"/>
    </location>
</feature>
<feature type="binding site" evidence="1">
    <location>
        <position position="563"/>
    </location>
    <ligand>
        <name>L-isoleucyl-5'-AMP</name>
        <dbReference type="ChEBI" id="CHEBI:178002"/>
    </ligand>
</feature>
<feature type="binding site" evidence="1">
    <location>
        <position position="608"/>
    </location>
    <ligand>
        <name>ATP</name>
        <dbReference type="ChEBI" id="CHEBI:30616"/>
    </ligand>
</feature>
<feature type="binding site" evidence="1">
    <location>
        <position position="892"/>
    </location>
    <ligand>
        <name>Zn(2+)</name>
        <dbReference type="ChEBI" id="CHEBI:29105"/>
    </ligand>
</feature>
<feature type="binding site" evidence="1">
    <location>
        <position position="895"/>
    </location>
    <ligand>
        <name>Zn(2+)</name>
        <dbReference type="ChEBI" id="CHEBI:29105"/>
    </ligand>
</feature>
<feature type="binding site" evidence="1">
    <location>
        <position position="912"/>
    </location>
    <ligand>
        <name>Zn(2+)</name>
        <dbReference type="ChEBI" id="CHEBI:29105"/>
    </ligand>
</feature>
<feature type="binding site" evidence="1">
    <location>
        <position position="915"/>
    </location>
    <ligand>
        <name>Zn(2+)</name>
        <dbReference type="ChEBI" id="CHEBI:29105"/>
    </ligand>
</feature>
<proteinExistence type="inferred from homology"/>
<evidence type="ECO:0000255" key="1">
    <source>
        <dbReference type="HAMAP-Rule" id="MF_02002"/>
    </source>
</evidence>
<keyword id="KW-0030">Aminoacyl-tRNA synthetase</keyword>
<keyword id="KW-0067">ATP-binding</keyword>
<keyword id="KW-0963">Cytoplasm</keyword>
<keyword id="KW-0436">Ligase</keyword>
<keyword id="KW-0479">Metal-binding</keyword>
<keyword id="KW-0547">Nucleotide-binding</keyword>
<keyword id="KW-0648">Protein biosynthesis</keyword>
<keyword id="KW-0862">Zinc</keyword>
<comment type="function">
    <text evidence="1">Catalyzes the attachment of isoleucine to tRNA(Ile). As IleRS can inadvertently accommodate and process structurally similar amino acids such as valine, to avoid such errors it has two additional distinct tRNA(Ile)-dependent editing activities. One activity is designated as 'pretransfer' editing and involves the hydrolysis of activated Val-AMP. The other activity is designated 'posttransfer' editing and involves deacylation of mischarged Val-tRNA(Ile).</text>
</comment>
<comment type="catalytic activity">
    <reaction evidence="1">
        <text>tRNA(Ile) + L-isoleucine + ATP = L-isoleucyl-tRNA(Ile) + AMP + diphosphate</text>
        <dbReference type="Rhea" id="RHEA:11060"/>
        <dbReference type="Rhea" id="RHEA-COMP:9666"/>
        <dbReference type="Rhea" id="RHEA-COMP:9695"/>
        <dbReference type="ChEBI" id="CHEBI:30616"/>
        <dbReference type="ChEBI" id="CHEBI:33019"/>
        <dbReference type="ChEBI" id="CHEBI:58045"/>
        <dbReference type="ChEBI" id="CHEBI:78442"/>
        <dbReference type="ChEBI" id="CHEBI:78528"/>
        <dbReference type="ChEBI" id="CHEBI:456215"/>
        <dbReference type="EC" id="6.1.1.5"/>
    </reaction>
</comment>
<comment type="cofactor">
    <cofactor evidence="1">
        <name>Zn(2+)</name>
        <dbReference type="ChEBI" id="CHEBI:29105"/>
    </cofactor>
    <text evidence="1">Binds 1 zinc ion per subunit.</text>
</comment>
<comment type="subunit">
    <text evidence="1">Monomer.</text>
</comment>
<comment type="subcellular location">
    <subcellularLocation>
        <location evidence="1">Cytoplasm</location>
    </subcellularLocation>
</comment>
<comment type="domain">
    <text evidence="1">IleRS has two distinct active sites: one for aminoacylation and one for editing. The misactivated valine is translocated from the active site to the editing site, which sterically excludes the correctly activated isoleucine. The single editing site contains two valyl binding pockets, one specific for each substrate (Val-AMP or Val-tRNA(Ile)).</text>
</comment>
<comment type="similarity">
    <text evidence="1">Belongs to the class-I aminoacyl-tRNA synthetase family. IleS type 1 subfamily.</text>
</comment>
<dbReference type="EC" id="6.1.1.5" evidence="1"/>
<dbReference type="EMBL" id="AL157959">
    <property type="protein sequence ID" value="CAM07888.1"/>
    <property type="molecule type" value="Genomic_DNA"/>
</dbReference>
<dbReference type="PIR" id="B81982">
    <property type="entry name" value="B81982"/>
</dbReference>
<dbReference type="RefSeq" id="WP_002247068.1">
    <property type="nucleotide sequence ID" value="NC_003116.1"/>
</dbReference>
<dbReference type="SMR" id="Q9JVY4"/>
<dbReference type="EnsemblBacteria" id="CAM07888">
    <property type="protein sequence ID" value="CAM07888"/>
    <property type="gene ID" value="NMA0622"/>
</dbReference>
<dbReference type="GeneID" id="93386739"/>
<dbReference type="KEGG" id="nma:NMA0622"/>
<dbReference type="HOGENOM" id="CLU_001493_7_1_4"/>
<dbReference type="Proteomes" id="UP000000626">
    <property type="component" value="Chromosome"/>
</dbReference>
<dbReference type="GO" id="GO:0005829">
    <property type="term" value="C:cytosol"/>
    <property type="evidence" value="ECO:0007669"/>
    <property type="project" value="TreeGrafter"/>
</dbReference>
<dbReference type="GO" id="GO:0002161">
    <property type="term" value="F:aminoacyl-tRNA deacylase activity"/>
    <property type="evidence" value="ECO:0007669"/>
    <property type="project" value="InterPro"/>
</dbReference>
<dbReference type="GO" id="GO:0005524">
    <property type="term" value="F:ATP binding"/>
    <property type="evidence" value="ECO:0007669"/>
    <property type="project" value="UniProtKB-UniRule"/>
</dbReference>
<dbReference type="GO" id="GO:0004822">
    <property type="term" value="F:isoleucine-tRNA ligase activity"/>
    <property type="evidence" value="ECO:0007669"/>
    <property type="project" value="UniProtKB-UniRule"/>
</dbReference>
<dbReference type="GO" id="GO:0000049">
    <property type="term" value="F:tRNA binding"/>
    <property type="evidence" value="ECO:0007669"/>
    <property type="project" value="InterPro"/>
</dbReference>
<dbReference type="GO" id="GO:0008270">
    <property type="term" value="F:zinc ion binding"/>
    <property type="evidence" value="ECO:0007669"/>
    <property type="project" value="UniProtKB-UniRule"/>
</dbReference>
<dbReference type="GO" id="GO:0006428">
    <property type="term" value="P:isoleucyl-tRNA aminoacylation"/>
    <property type="evidence" value="ECO:0007669"/>
    <property type="project" value="UniProtKB-UniRule"/>
</dbReference>
<dbReference type="CDD" id="cd07960">
    <property type="entry name" value="Anticodon_Ia_Ile_BEm"/>
    <property type="match status" value="1"/>
</dbReference>
<dbReference type="FunFam" id="3.40.50.620:FF:000042">
    <property type="entry name" value="Isoleucine--tRNA ligase"/>
    <property type="match status" value="1"/>
</dbReference>
<dbReference type="FunFam" id="3.40.50.620:FF:000048">
    <property type="entry name" value="Isoleucine--tRNA ligase"/>
    <property type="match status" value="1"/>
</dbReference>
<dbReference type="Gene3D" id="1.10.730.20">
    <property type="match status" value="1"/>
</dbReference>
<dbReference type="Gene3D" id="3.40.50.620">
    <property type="entry name" value="HUPs"/>
    <property type="match status" value="2"/>
</dbReference>
<dbReference type="HAMAP" id="MF_02002">
    <property type="entry name" value="Ile_tRNA_synth_type1"/>
    <property type="match status" value="1"/>
</dbReference>
<dbReference type="InterPro" id="IPR001412">
    <property type="entry name" value="aa-tRNA-synth_I_CS"/>
</dbReference>
<dbReference type="InterPro" id="IPR002300">
    <property type="entry name" value="aa-tRNA-synth_Ia"/>
</dbReference>
<dbReference type="InterPro" id="IPR033708">
    <property type="entry name" value="Anticodon_Ile_BEm"/>
</dbReference>
<dbReference type="InterPro" id="IPR002301">
    <property type="entry name" value="Ile-tRNA-ligase"/>
</dbReference>
<dbReference type="InterPro" id="IPR023585">
    <property type="entry name" value="Ile-tRNA-ligase_type1"/>
</dbReference>
<dbReference type="InterPro" id="IPR050081">
    <property type="entry name" value="Ile-tRNA_ligase"/>
</dbReference>
<dbReference type="InterPro" id="IPR013155">
    <property type="entry name" value="M/V/L/I-tRNA-synth_anticd-bd"/>
</dbReference>
<dbReference type="InterPro" id="IPR014729">
    <property type="entry name" value="Rossmann-like_a/b/a_fold"/>
</dbReference>
<dbReference type="InterPro" id="IPR009080">
    <property type="entry name" value="tRNAsynth_Ia_anticodon-bd"/>
</dbReference>
<dbReference type="InterPro" id="IPR009008">
    <property type="entry name" value="Val/Leu/Ile-tRNA-synth_edit"/>
</dbReference>
<dbReference type="InterPro" id="IPR010663">
    <property type="entry name" value="Znf_FPG/IleRS"/>
</dbReference>
<dbReference type="NCBIfam" id="TIGR00392">
    <property type="entry name" value="ileS"/>
    <property type="match status" value="1"/>
</dbReference>
<dbReference type="PANTHER" id="PTHR42765:SF1">
    <property type="entry name" value="ISOLEUCINE--TRNA LIGASE, MITOCHONDRIAL"/>
    <property type="match status" value="1"/>
</dbReference>
<dbReference type="PANTHER" id="PTHR42765">
    <property type="entry name" value="SOLEUCYL-TRNA SYNTHETASE"/>
    <property type="match status" value="1"/>
</dbReference>
<dbReference type="Pfam" id="PF08264">
    <property type="entry name" value="Anticodon_1"/>
    <property type="match status" value="1"/>
</dbReference>
<dbReference type="Pfam" id="PF00133">
    <property type="entry name" value="tRNA-synt_1"/>
    <property type="match status" value="1"/>
</dbReference>
<dbReference type="Pfam" id="PF06827">
    <property type="entry name" value="zf-FPG_IleRS"/>
    <property type="match status" value="1"/>
</dbReference>
<dbReference type="PRINTS" id="PR00984">
    <property type="entry name" value="TRNASYNTHILE"/>
</dbReference>
<dbReference type="SUPFAM" id="SSF47323">
    <property type="entry name" value="Anticodon-binding domain of a subclass of class I aminoacyl-tRNA synthetases"/>
    <property type="match status" value="1"/>
</dbReference>
<dbReference type="SUPFAM" id="SSF52374">
    <property type="entry name" value="Nucleotidylyl transferase"/>
    <property type="match status" value="1"/>
</dbReference>
<dbReference type="SUPFAM" id="SSF50677">
    <property type="entry name" value="ValRS/IleRS/LeuRS editing domain"/>
    <property type="match status" value="1"/>
</dbReference>
<dbReference type="PROSITE" id="PS00178">
    <property type="entry name" value="AA_TRNA_LIGASE_I"/>
    <property type="match status" value="1"/>
</dbReference>
<protein>
    <recommendedName>
        <fullName evidence="1">Isoleucine--tRNA ligase</fullName>
        <ecNumber evidence="1">6.1.1.5</ecNumber>
    </recommendedName>
    <alternativeName>
        <fullName evidence="1">Isoleucyl-tRNA synthetase</fullName>
        <shortName evidence="1">IleRS</shortName>
    </alternativeName>
</protein>
<name>SYI_NEIMA</name>
<accession>Q9JVY4</accession>
<accession>A1IQ62</accession>